<name>HCN2_HUMAN</name>
<reference key="1">
    <citation type="journal article" date="1999" name="Biochim. Biophys. Acta">
        <title>The human gene coding for HCN2, a pacemaker channel of the heart.</title>
        <authorList>
            <person name="Vaccari T."/>
            <person name="Moroni A."/>
            <person name="Rocchi M."/>
            <person name="Gorza L."/>
            <person name="Bianchi M.E."/>
            <person name="Beltrame M."/>
            <person name="DiFrancesco D."/>
        </authorList>
    </citation>
    <scope>NUCLEOTIDE SEQUENCE [MRNA]</scope>
    <scope>FUNCTION</scope>
    <scope>SUBCELLULAR LOCATION</scope>
</reference>
<reference key="2">
    <citation type="journal article" date="1999" name="EMBO J.">
        <title>Two pacemaker channels from human heart with profoundly different activation kinetics.</title>
        <authorList>
            <person name="Ludwig A."/>
            <person name="Zong X."/>
            <person name="Stieber J."/>
            <person name="Hullin R."/>
            <person name="Hofmann F."/>
            <person name="Biel M."/>
        </authorList>
    </citation>
    <scope>NUCLEOTIDE SEQUENCE [GENOMIC DNA / MRNA]</scope>
    <scope>FUNCTION</scope>
    <scope>TRANSPORTER ACTIVITY</scope>
    <scope>ACTIVITY REGULATION</scope>
    <scope>SUBCELLULAR LOCATION</scope>
    <scope>TISSUE SPECIFICITY</scope>
    <source>
        <tissue>Heart</tissue>
    </source>
</reference>
<reference key="3">
    <citation type="journal article" date="2004" name="Nature">
        <title>The DNA sequence and biology of human chromosome 19.</title>
        <authorList>
            <person name="Grimwood J."/>
            <person name="Gordon L.A."/>
            <person name="Olsen A.S."/>
            <person name="Terry A."/>
            <person name="Schmutz J."/>
            <person name="Lamerdin J.E."/>
            <person name="Hellsten U."/>
            <person name="Goodstein D."/>
            <person name="Couronne O."/>
            <person name="Tran-Gyamfi M."/>
            <person name="Aerts A."/>
            <person name="Altherr M."/>
            <person name="Ashworth L."/>
            <person name="Bajorek E."/>
            <person name="Black S."/>
            <person name="Branscomb E."/>
            <person name="Caenepeel S."/>
            <person name="Carrano A.V."/>
            <person name="Caoile C."/>
            <person name="Chan Y.M."/>
            <person name="Christensen M."/>
            <person name="Cleland C.A."/>
            <person name="Copeland A."/>
            <person name="Dalin E."/>
            <person name="Dehal P."/>
            <person name="Denys M."/>
            <person name="Detter J.C."/>
            <person name="Escobar J."/>
            <person name="Flowers D."/>
            <person name="Fotopulos D."/>
            <person name="Garcia C."/>
            <person name="Georgescu A.M."/>
            <person name="Glavina T."/>
            <person name="Gomez M."/>
            <person name="Gonzales E."/>
            <person name="Groza M."/>
            <person name="Hammon N."/>
            <person name="Hawkins T."/>
            <person name="Haydu L."/>
            <person name="Ho I."/>
            <person name="Huang W."/>
            <person name="Israni S."/>
            <person name="Jett J."/>
            <person name="Kadner K."/>
            <person name="Kimball H."/>
            <person name="Kobayashi A."/>
            <person name="Larionov V."/>
            <person name="Leem S.-H."/>
            <person name="Lopez F."/>
            <person name="Lou Y."/>
            <person name="Lowry S."/>
            <person name="Malfatti S."/>
            <person name="Martinez D."/>
            <person name="McCready P.M."/>
            <person name="Medina C."/>
            <person name="Morgan J."/>
            <person name="Nelson K."/>
            <person name="Nolan M."/>
            <person name="Ovcharenko I."/>
            <person name="Pitluck S."/>
            <person name="Pollard M."/>
            <person name="Popkie A.P."/>
            <person name="Predki P."/>
            <person name="Quan G."/>
            <person name="Ramirez L."/>
            <person name="Rash S."/>
            <person name="Retterer J."/>
            <person name="Rodriguez A."/>
            <person name="Rogers S."/>
            <person name="Salamov A."/>
            <person name="Salazar A."/>
            <person name="She X."/>
            <person name="Smith D."/>
            <person name="Slezak T."/>
            <person name="Solovyev V."/>
            <person name="Thayer N."/>
            <person name="Tice H."/>
            <person name="Tsai M."/>
            <person name="Ustaszewska A."/>
            <person name="Vo N."/>
            <person name="Wagner M."/>
            <person name="Wheeler J."/>
            <person name="Wu K."/>
            <person name="Xie G."/>
            <person name="Yang J."/>
            <person name="Dubchak I."/>
            <person name="Furey T.S."/>
            <person name="DeJong P."/>
            <person name="Dickson M."/>
            <person name="Gordon D."/>
            <person name="Eichler E.E."/>
            <person name="Pennacchio L.A."/>
            <person name="Richardson P."/>
            <person name="Stubbs L."/>
            <person name="Rokhsar D.S."/>
            <person name="Myers R.M."/>
            <person name="Rubin E.M."/>
            <person name="Lucas S.M."/>
        </authorList>
    </citation>
    <scope>NUCLEOTIDE SEQUENCE [LARGE SCALE GENOMIC DNA]</scope>
</reference>
<reference key="4">
    <citation type="journal article" date="1998" name="Cell">
        <title>Identification of a gene encoding a hyperpolarization-activated 'pacemaker' channel of brain.</title>
        <authorList>
            <person name="Santoro B."/>
            <person name="Liu D.T."/>
            <person name="Yao H."/>
            <person name="Bartsch D."/>
            <person name="Kandel E.R."/>
            <person name="Siegelbaum S.A."/>
            <person name="Tibbs G.R."/>
        </authorList>
    </citation>
    <scope>NUCLEOTIDE SEQUENCE [MRNA] OF 147-743</scope>
    <scope>TISSUE SPECIFICITY</scope>
    <source>
        <tissue>Brain</tissue>
    </source>
</reference>
<reference key="5">
    <citation type="journal article" date="2008" name="Proc. Natl. Acad. Sci. U.S.A.">
        <title>A quantitative atlas of mitotic phosphorylation.</title>
        <authorList>
            <person name="Dephoure N."/>
            <person name="Zhou C."/>
            <person name="Villen J."/>
            <person name="Beausoleil S.A."/>
            <person name="Bakalarski C.E."/>
            <person name="Elledge S.J."/>
            <person name="Gygi S.P."/>
        </authorList>
    </citation>
    <scope>IDENTIFICATION BY MASS SPECTROMETRY [LARGE SCALE ANALYSIS]</scope>
    <source>
        <tissue>Cervix carcinoma</tissue>
    </source>
</reference>
<reference evidence="19" key="6">
    <citation type="journal article" date="2011" name="J. Biol. Chem.">
        <title>Tetramerization dynamics of C-terminal domain underlies isoform-specific cAMP gating in hyperpolarization-activated cyclic nucleotide-gated channels.</title>
        <authorList>
            <person name="Lolicato M."/>
            <person name="Nardini M."/>
            <person name="Gazzarrini S."/>
            <person name="Moller S."/>
            <person name="Bertinetti D."/>
            <person name="Herberg F.W."/>
            <person name="Bolognesi M."/>
            <person name="Martin H."/>
            <person name="Fasolini M."/>
            <person name="Bertrand J.A."/>
            <person name="Arrigoni C."/>
            <person name="Thiel G."/>
            <person name="Moroni A."/>
        </authorList>
    </citation>
    <scope>X-RAY CRYSTALLOGRAPHY (2.3 ANGSTROMS) OF 470-672 IN COMPLEX WITH CAMP</scope>
    <scope>FUNCTION</scope>
    <scope>NUCLEOTIDE-BINDING</scope>
    <scope>ACTIVITY REGULATION</scope>
    <scope>SUBUNIT</scope>
</reference>
<reference evidence="18" key="7">
    <citation type="journal article" date="2014" name="Proc. Natl. Acad. Sci. U.S.A.">
        <title>Structural basis for the mutual antagonism of cAMP and TRIP8b in regulating HCN channel function.</title>
        <authorList>
            <person name="Saponaro A."/>
            <person name="Pauleta S.R."/>
            <person name="Cantini F."/>
            <person name="Matzapetakis M."/>
            <person name="Hammann C."/>
            <person name="Donadoni C."/>
            <person name="Hu L."/>
            <person name="Thiel G."/>
            <person name="Banci L."/>
            <person name="Santoro B."/>
            <person name="Moroni A."/>
        </authorList>
    </citation>
    <scope>STRUCTURE BY NMR OF 521-672</scope>
</reference>
<reference key="8">
    <citation type="journal article" date="2016" name="J. Physiol. Sci.">
        <title>The hyperpolarization-activated cyclic nucleotide-gated (HCN) channels contain multiple S-palmitoylation sites.</title>
        <authorList>
            <person name="Itoh M."/>
            <person name="Ishihara K."/>
            <person name="Nakashima N."/>
            <person name="Takano M."/>
        </authorList>
    </citation>
    <scope>PALMITOYLATION</scope>
</reference>
<reference key="9">
    <citation type="journal article" date="2011" name="J. Neurosci.">
        <title>Recessive loss-of-function mutation in the pacemaker HCN2 channel causing increased neuronal excitability in a patient with idiopathic generalized epilepsy.</title>
        <authorList>
            <person name="DiFrancesco J.C."/>
            <person name="Barbuti A."/>
            <person name="Milanesi R."/>
            <person name="Coco S."/>
            <person name="Bucchi A."/>
            <person name="Bottelli G."/>
            <person name="Ferrarese C."/>
            <person name="Franceschetti S."/>
            <person name="Terragni B."/>
            <person name="Baruscotti M."/>
            <person name="DiFrancesco D."/>
        </authorList>
    </citation>
    <scope>VARIANT EIG17 LYS-515</scope>
    <scope>CHARACTERIZATION OF VARIANT EIG17 LYS-515</scope>
    <scope>INVOLVEMENT IN EIG17</scope>
</reference>
<reference key="10">
    <citation type="journal article" date="2013" name="PLoS ONE">
        <title>Novel HCN2 mutation contributes to febrile seizures by shifting the channel's kinetics in a temperature-dependent manner.</title>
        <authorList>
            <person name="Nakamura Y."/>
            <person name="Shi X."/>
            <person name="Numata T."/>
            <person name="Mori Y."/>
            <person name="Inoue R."/>
            <person name="Lossin C."/>
            <person name="Baram T.Z."/>
            <person name="Hirose S."/>
        </authorList>
    </citation>
    <scope>VARIANT FEB2 LEU-126</scope>
    <scope>CHARACTERIZATION OF VARIANT FEB2 LEU-126</scope>
    <scope>INVOLVEMENT IN FEB2</scope>
</reference>
<reference key="11">
    <citation type="journal article" date="2018" name="Hum. Mutat.">
        <title>Gain-of-function HCN2 variants in genetic epilepsy.</title>
        <authorList>
            <person name="Li M."/>
            <person name="Maljevic S."/>
            <person name="Phillips A.M."/>
            <person name="Petrovski S."/>
            <person name="Hildebrand M.S."/>
            <person name="Burgess R."/>
            <person name="Mount T."/>
            <person name="Zara F."/>
            <person name="Striano P."/>
            <person name="Schubert J."/>
            <person name="Thiele H."/>
            <person name="Nuernberg P."/>
            <person name="Wong M."/>
            <person name="Weisenberg J.L."/>
            <person name="Thio L.L."/>
            <person name="Lerche H."/>
            <person name="Scheffer I.E."/>
            <person name="Berkovic S.F."/>
            <person name="Petrou S."/>
            <person name="Reid C.A."/>
        </authorList>
    </citation>
    <scope>VARIANTS EIG17 MET-246; TRP-632 AND CYS-756</scope>
    <scope>CHARACTERIZATION OF VARIANTS EIG17 MET-246; TRP-632 AND CYS-756</scope>
    <scope>INVOLVEMENT IN EIG17</scope>
    <scope>CHARACTERIZATION OF VARIANTS LYS-280 AND THR-705</scope>
</reference>
<reference key="12">
    <citation type="journal article" date="2019" name="Mol. Psychiatry">
        <title>A set of regulatory genes co-expressed in embryonic human brain is implicated in disrupted speech development.</title>
        <authorList>
            <person name="Eising E."/>
            <person name="Carrion-Castillo A."/>
            <person name="Vino A."/>
            <person name="Strand E.A."/>
            <person name="Jakielski K.J."/>
            <person name="Scerri T.S."/>
            <person name="Hildebrand M.S."/>
            <person name="Webster R."/>
            <person name="Ma A."/>
            <person name="Mazoyer B."/>
            <person name="Francks C."/>
            <person name="Bahlo M."/>
            <person name="Scheffer I.E."/>
            <person name="Morgan A.T."/>
            <person name="Shriberg L.D."/>
            <person name="Fisher S.E."/>
        </authorList>
    </citation>
    <scope>VARIANT VAL-418</scope>
</reference>
<organism>
    <name type="scientific">Homo sapiens</name>
    <name type="common">Human</name>
    <dbReference type="NCBI Taxonomy" id="9606"/>
    <lineage>
        <taxon>Eukaryota</taxon>
        <taxon>Metazoa</taxon>
        <taxon>Chordata</taxon>
        <taxon>Craniata</taxon>
        <taxon>Vertebrata</taxon>
        <taxon>Euteleostomi</taxon>
        <taxon>Mammalia</taxon>
        <taxon>Eutheria</taxon>
        <taxon>Euarchontoglires</taxon>
        <taxon>Primates</taxon>
        <taxon>Haplorrhini</taxon>
        <taxon>Catarrhini</taxon>
        <taxon>Hominidae</taxon>
        <taxon>Homo</taxon>
    </lineage>
</organism>
<keyword id="KW-0002">3D-structure</keyword>
<keyword id="KW-0924">Ammonia transport</keyword>
<keyword id="KW-0114">cAMP</keyword>
<keyword id="KW-0116">cAMP-binding</keyword>
<keyword id="KW-1003">Cell membrane</keyword>
<keyword id="KW-0225">Disease variant</keyword>
<keyword id="KW-0887">Epilepsy</keyword>
<keyword id="KW-0325">Glycoprotein</keyword>
<keyword id="KW-0407">Ion channel</keyword>
<keyword id="KW-0406">Ion transport</keyword>
<keyword id="KW-1071">Ligand-gated ion channel</keyword>
<keyword id="KW-0449">Lipoprotein</keyword>
<keyword id="KW-0472">Membrane</keyword>
<keyword id="KW-0488">Methylation</keyword>
<keyword id="KW-0547">Nucleotide-binding</keyword>
<keyword id="KW-0564">Palmitate</keyword>
<keyword id="KW-0597">Phosphoprotein</keyword>
<keyword id="KW-0630">Potassium</keyword>
<keyword id="KW-0631">Potassium channel</keyword>
<keyword id="KW-0633">Potassium transport</keyword>
<keyword id="KW-1267">Proteomics identification</keyword>
<keyword id="KW-1185">Reference proteome</keyword>
<keyword id="KW-0915">Sodium</keyword>
<keyword id="KW-0894">Sodium channel</keyword>
<keyword id="KW-0739">Sodium transport</keyword>
<keyword id="KW-0812">Transmembrane</keyword>
<keyword id="KW-1133">Transmembrane helix</keyword>
<keyword id="KW-0813">Transport</keyword>
<keyword id="KW-0851">Voltage-gated channel</keyword>
<feature type="chain" id="PRO_0000054111" description="Potassium/sodium hyperpolarization-activated cyclic nucleotide-gated channel 2">
    <location>
        <begin position="1"/>
        <end position="889"/>
    </location>
</feature>
<feature type="topological domain" description="Cytoplasmic" evidence="2">
    <location>
        <begin position="1"/>
        <end position="215"/>
    </location>
</feature>
<feature type="transmembrane region" description="Helical; Name=Segment S1" evidence="2">
    <location>
        <begin position="216"/>
        <end position="236"/>
    </location>
</feature>
<feature type="topological domain" description="Extracellular" evidence="2">
    <location>
        <begin position="237"/>
        <end position="240"/>
    </location>
</feature>
<feature type="transmembrane region" description="Helical; Name=Segment S2" evidence="2">
    <location>
        <begin position="241"/>
        <end position="261"/>
    </location>
</feature>
<feature type="topological domain" description="Cytoplasmic" evidence="2">
    <location>
        <begin position="262"/>
        <end position="288"/>
    </location>
</feature>
<feature type="transmembrane region" description="Helical; Name=Segment S3" evidence="2">
    <location>
        <begin position="289"/>
        <end position="309"/>
    </location>
</feature>
<feature type="topological domain" description="Extracellular" evidence="2">
    <location>
        <begin position="310"/>
        <end position="317"/>
    </location>
</feature>
<feature type="transmembrane region" description="Helical; Voltage-sensor; Name=Segment S4" evidence="2">
    <location>
        <begin position="318"/>
        <end position="338"/>
    </location>
</feature>
<feature type="topological domain" description="Cytoplasmic" evidence="2">
    <location>
        <begin position="339"/>
        <end position="369"/>
    </location>
</feature>
<feature type="transmembrane region" description="Helical; Name=Segment S5" evidence="2">
    <location>
        <begin position="370"/>
        <end position="390"/>
    </location>
</feature>
<feature type="topological domain" description="Extracellular" evidence="2">
    <location>
        <begin position="391"/>
        <end position="413"/>
    </location>
</feature>
<feature type="intramembrane region" description="Pore-forming; Name=Segment H5" evidence="2">
    <location>
        <begin position="414"/>
        <end position="435"/>
    </location>
</feature>
<feature type="topological domain" description="Extracellular" evidence="2">
    <location>
        <begin position="436"/>
        <end position="440"/>
    </location>
</feature>
<feature type="transmembrane region" description="Helical; Name=Segment S6" evidence="2">
    <location>
        <begin position="441"/>
        <end position="461"/>
    </location>
</feature>
<feature type="topological domain" description="Cytoplasmic" evidence="2">
    <location>
        <begin position="462"/>
        <end position="889"/>
    </location>
</feature>
<feature type="region of interest" description="Disordered" evidence="6">
    <location>
        <begin position="1"/>
        <end position="159"/>
    </location>
</feature>
<feature type="region of interest" description="Involved in subunit assembly" evidence="1">
    <location>
        <begin position="158"/>
        <end position="209"/>
    </location>
</feature>
<feature type="region of interest" description="Disordered" evidence="6">
    <location>
        <begin position="754"/>
        <end position="889"/>
    </location>
</feature>
<feature type="compositionally biased region" description="Gly residues" evidence="6">
    <location>
        <begin position="1"/>
        <end position="10"/>
    </location>
</feature>
<feature type="compositionally biased region" description="Pro residues" evidence="6">
    <location>
        <begin position="17"/>
        <end position="55"/>
    </location>
</feature>
<feature type="compositionally biased region" description="Low complexity" evidence="6">
    <location>
        <begin position="129"/>
        <end position="155"/>
    </location>
</feature>
<feature type="compositionally biased region" description="Pro residues" evidence="6">
    <location>
        <begin position="760"/>
        <end position="784"/>
    </location>
</feature>
<feature type="compositionally biased region" description="Low complexity" evidence="6">
    <location>
        <begin position="785"/>
        <end position="860"/>
    </location>
</feature>
<feature type="binding site" evidence="9 19">
    <location>
        <position position="599"/>
    </location>
    <ligand>
        <name>3',5'-cyclic AMP</name>
        <dbReference type="ChEBI" id="CHEBI:58165"/>
    </ligand>
</feature>
<feature type="binding site" evidence="9 19">
    <location>
        <position position="608"/>
    </location>
    <ligand>
        <name>3',5'-cyclic AMP</name>
        <dbReference type="ChEBI" id="CHEBI:58165"/>
    </ligand>
</feature>
<feature type="binding site" evidence="9 19">
    <location>
        <position position="609"/>
    </location>
    <ligand>
        <name>3',5'-cyclic AMP</name>
        <dbReference type="ChEBI" id="CHEBI:58165"/>
    </ligand>
</feature>
<feature type="binding site" evidence="9 19">
    <location>
        <position position="610"/>
    </location>
    <ligand>
        <name>3',5'-cyclic AMP</name>
        <dbReference type="ChEBI" id="CHEBI:58165"/>
    </ligand>
</feature>
<feature type="binding site" evidence="9 19">
    <location>
        <position position="611"/>
    </location>
    <ligand>
        <name>3',5'-cyclic AMP</name>
        <dbReference type="ChEBI" id="CHEBI:58165"/>
    </ligand>
</feature>
<feature type="binding site" evidence="9 19">
    <location>
        <position position="618"/>
    </location>
    <ligand>
        <name>3',5'-cyclic AMP</name>
        <dbReference type="ChEBI" id="CHEBI:58165"/>
    </ligand>
</feature>
<feature type="binding site" evidence="9 19">
    <location>
        <position position="619"/>
    </location>
    <ligand>
        <name>3',5'-cyclic AMP</name>
        <dbReference type="ChEBI" id="CHEBI:58165"/>
    </ligand>
</feature>
<feature type="binding site" evidence="9 19">
    <location>
        <position position="659"/>
    </location>
    <ligand>
        <name>3',5'-cyclic AMP</name>
        <dbReference type="ChEBI" id="CHEBI:58165"/>
    </ligand>
</feature>
<feature type="modified residue" description="Phosphoserine" evidence="3">
    <location>
        <position position="146"/>
    </location>
</feature>
<feature type="modified residue" description="Phosphoserine" evidence="4">
    <location>
        <position position="161"/>
    </location>
</feature>
<feature type="modified residue" description="Phosphoserine; by PKG/PRKG2" evidence="3">
    <location>
        <position position="668"/>
    </location>
</feature>
<feature type="modified residue" description="Phosphoserine" evidence="4">
    <location>
        <position position="754"/>
    </location>
</feature>
<feature type="modified residue" description="Omega-N-methylarginine" evidence="3">
    <location>
        <position position="756"/>
    </location>
</feature>
<feature type="modified residue" description="Phosphoserine" evidence="3">
    <location>
        <position position="771"/>
    </location>
</feature>
<feature type="modified residue" description="Phosphoserine" evidence="3">
    <location>
        <position position="779"/>
    </location>
</feature>
<feature type="modified residue" description="Phosphoserine" evidence="3">
    <location>
        <position position="786"/>
    </location>
</feature>
<feature type="modified residue" description="Phosphoserine" evidence="3">
    <location>
        <position position="866"/>
    </location>
</feature>
<feature type="modified residue" description="Phosphoserine" evidence="3">
    <location>
        <position position="868"/>
    </location>
</feature>
<feature type="glycosylation site" description="N-linked (GlcNAc...) asparagine" evidence="3">
    <location>
        <position position="407"/>
    </location>
</feature>
<feature type="sequence variant" id="VAR_086190" description="In FEB2; affects channel activity resulting in faster kinetics and increased current density at higher temperature compared to wild type; dbSNP:rs1258293482." evidence="11">
    <original>S</original>
    <variation>L</variation>
    <location>
        <position position="126"/>
    </location>
</feature>
<feature type="sequence variant" id="VAR_086191" description="In EIG17; gain-of-function variant; affects channel activity resulting in a depolarizing shift in activation and faster activation kinetics compared to controls; dbSNP:rs772145901." evidence="13">
    <original>V</original>
    <variation>M</variation>
    <location>
        <position position="246"/>
    </location>
</feature>
<feature type="sequence variant" id="VAR_086192" description="Does not affect channel activity; dbSNP:rs114790896." evidence="13">
    <original>E</original>
    <variation>K</variation>
    <location>
        <position position="280"/>
    </location>
</feature>
<feature type="sequence variant" id="VAR_081530" description="Found in a patient with childhood apraxia of speech; uncertain significance." evidence="14">
    <original>L</original>
    <variation>V</variation>
    <location>
        <position position="418"/>
    </location>
</feature>
<feature type="sequence variant" id="VAR_086193" description="In EIG17; causes a large negative shift of the activation curve; homomeric mutant channels transfected into rat cortical neurons lower the threshold of action potential firing and strongly increase cell excitability when compared with wild-type channels; dbSNP:rs746420784." evidence="10">
    <original>E</original>
    <variation>K</variation>
    <location>
        <position position="515"/>
    </location>
</feature>
<feature type="sequence variant" id="VAR_061106" description="In dbSNP:rs55687900.">
    <original>R</original>
    <variation>Q</variation>
    <location>
        <position position="527"/>
    </location>
</feature>
<feature type="sequence variant" id="VAR_086194" description="In EIG17; gain-of-function variant; affects channel activity resulting in a depolarizing shift in activation and faster activation kinetics compared to controls; dbSNP:rs1235020687." evidence="13">
    <original>S</original>
    <variation>W</variation>
    <location>
        <position position="632"/>
    </location>
</feature>
<feature type="sequence variant" id="VAR_086195" description="Does not affect channel activity; dbSNP:rs200188844." evidence="13">
    <original>A</original>
    <variation>T</variation>
    <location>
        <position position="705"/>
    </location>
</feature>
<feature type="sequence variant" id="VAR_086196" description="In EIG17; uncertain significance; does not affect channel activity; dbSNP:rs1230549709." evidence="13">
    <original>R</original>
    <variation>C</variation>
    <location>
        <position position="756"/>
    </location>
</feature>
<feature type="sequence conflict" description="In Ref. 1; AAC28444." evidence="16" ref="1">
    <original>TPAP</original>
    <variation>SPTT</variation>
    <location>
        <begin position="17"/>
        <end position="20"/>
    </location>
</feature>
<feature type="sequence conflict" description="In Ref. 1; AAC28444." evidence="16" ref="1">
    <original>A</original>
    <variation>R</variation>
    <location>
        <position position="29"/>
    </location>
</feature>
<feature type="sequence conflict" description="In Ref. 1; AAC28444." evidence="16" ref="1">
    <original>Q</original>
    <variation>K</variation>
    <location>
        <position position="32"/>
    </location>
</feature>
<feature type="sequence conflict" description="In Ref. 4; AAC39760." evidence="16" ref="4">
    <original>D</original>
    <variation>V</variation>
    <location>
        <position position="294"/>
    </location>
</feature>
<feature type="sequence conflict" description="In Ref. 4; AAC39760." evidence="16" ref="4">
    <original>L</original>
    <variation>F</variation>
    <location>
        <position position="713"/>
    </location>
</feature>
<feature type="sequence conflict" description="In Ref. 2; CAB42602/CAB42630." evidence="16" ref="2">
    <original>G</original>
    <variation>R</variation>
    <location>
        <position position="849"/>
    </location>
</feature>
<feature type="helix" evidence="21">
    <location>
        <begin position="471"/>
        <end position="489"/>
    </location>
</feature>
<feature type="helix" evidence="21">
    <location>
        <begin position="494"/>
        <end position="508"/>
    </location>
</feature>
<feature type="helix" evidence="21">
    <location>
        <begin position="515"/>
        <end position="520"/>
    </location>
</feature>
<feature type="helix" evidence="21">
    <location>
        <begin position="524"/>
        <end position="534"/>
    </location>
</feature>
<feature type="helix" evidence="21">
    <location>
        <begin position="536"/>
        <end position="540"/>
    </location>
</feature>
<feature type="turn" evidence="21">
    <location>
        <begin position="543"/>
        <end position="547"/>
    </location>
</feature>
<feature type="helix" evidence="21">
    <location>
        <begin position="550"/>
        <end position="557"/>
    </location>
</feature>
<feature type="strand" evidence="21">
    <location>
        <begin position="561"/>
        <end position="565"/>
    </location>
</feature>
<feature type="strand" evidence="21">
    <location>
        <begin position="570"/>
        <end position="572"/>
    </location>
</feature>
<feature type="strand" evidence="20">
    <location>
        <begin position="576"/>
        <end position="578"/>
    </location>
</feature>
<feature type="strand" evidence="21">
    <location>
        <begin position="580"/>
        <end position="586"/>
    </location>
</feature>
<feature type="strand" evidence="21">
    <location>
        <begin position="589"/>
        <end position="592"/>
    </location>
</feature>
<feature type="strand" evidence="21">
    <location>
        <begin position="598"/>
        <end position="601"/>
    </location>
</feature>
<feature type="strand" evidence="21">
    <location>
        <begin position="606"/>
        <end position="608"/>
    </location>
</feature>
<feature type="helix" evidence="21">
    <location>
        <begin position="610"/>
        <end position="614"/>
    </location>
</feature>
<feature type="strand" evidence="21">
    <location>
        <begin position="619"/>
        <end position="626"/>
    </location>
</feature>
<feature type="strand" evidence="21">
    <location>
        <begin position="628"/>
        <end position="634"/>
    </location>
</feature>
<feature type="helix" evidence="21">
    <location>
        <begin position="635"/>
        <end position="644"/>
    </location>
</feature>
<feature type="helix" evidence="21">
    <location>
        <begin position="646"/>
        <end position="661"/>
    </location>
</feature>
<feature type="turn" evidence="21">
    <location>
        <begin position="662"/>
        <end position="664"/>
    </location>
</feature>
<feature type="helix" evidence="21">
    <location>
        <begin position="668"/>
        <end position="670"/>
    </location>
</feature>
<protein>
    <recommendedName>
        <fullName>Potassium/sodium hyperpolarization-activated cyclic nucleotide-gated channel 2</fullName>
    </recommendedName>
    <alternativeName>
        <fullName>Brain cyclic nucleotide-gated channel 2</fullName>
        <shortName>BCNG-2</shortName>
    </alternativeName>
</protein>
<proteinExistence type="evidence at protein level"/>
<sequence length="889" mass="96950">MDARGGGGRPGESPGATPAPGPPPPPPPAPPQQQPPPPPPPAPPPGPGPAPPQHPPRAEALPPEAADEGGPRGRLRSRDSSCGRPGTPGAASTAKGSPNGECGRGEPQCSPAGPEGPARGPKVSFSCRGAASGPAPGPGPAEEAGSEEAGPAGEPRGSQASFMQRQFGALLQPGVNKFSLRMFGSQKAVEREQERVKSAGAWIIHPYSDFRFYWDFTMLLFMVGNLIIIPVGITFFKDETTAPWIVFNVVSDTFFLMDLVLNFRTGIVIEDNTEIILDPEKIKKKYLRTWFVVDFVSSIPVDYIFLIVEKGIDSEVYKTARALRIVRFTKILSLLRLLRLSRLIRYIHQWEEIFHMTYDLASAVMRICNLISMMLLLCHWDGCLQFLVPMLQDFPRNCWVSINGMVNHSWSELYSFALFKAMSHMLCIGYGRQAPESMTDIWLTMLSMIVGATCYAMFIGHATALIQSLDSSRRQYQEKYKQVEQYMSFHKLPADFRQKIHDYYEHRYQGKMFDEDSILGELNGPLREEIVNFNCRKLVASMPLFANADPNFVTAMLTKLKFEVFQPGDYIIREGTIGKKMYFIQHGVVSVLTKGNKEMKLSDGSYFGEICLLTRGRRTASVRADTYCRLYSLSVDNFNEVLEEYPMMRRAFETVAIDRLDRIGKKNSILLHKVQHDLNSGVFNNQENAIIQEIVKYDREMVQQAELGQRVGLFPPPPPPPQVTSAIATLQQAAAMSFCPQVARPLVGPLALGSPRLVRRPPPGPAPAAASPGPPPPASPPGAPASPRAPRTSPYGGLPAAPLAGPALPARRLSRASRPLSASQPSLPHGAPGPAASTRPASSSTPRLGPTPAARAAAPSPDRRDSASPGAAGGLDPQDSARSRLSSNL</sequence>
<accession>Q9UL51</accession>
<accession>O60742</accession>
<accession>O60743</accession>
<accession>O75267</accession>
<accession>Q9UBS2</accession>
<dbReference type="EMBL" id="AF065164">
    <property type="protein sequence ID" value="AAC28444.2"/>
    <property type="molecule type" value="mRNA"/>
</dbReference>
<dbReference type="EMBL" id="AJ012582">
    <property type="protein sequence ID" value="CAB42602.1"/>
    <property type="molecule type" value="mRNA"/>
</dbReference>
<dbReference type="EMBL" id="AJ133727">
    <property type="protein sequence ID" value="CAB42630.1"/>
    <property type="molecule type" value="Genomic_DNA"/>
</dbReference>
<dbReference type="EMBL" id="AJ133728">
    <property type="protein sequence ID" value="CAB42630.1"/>
    <property type="status" value="JOINED"/>
    <property type="molecule type" value="Genomic_DNA"/>
</dbReference>
<dbReference type="EMBL" id="AJ133729">
    <property type="protein sequence ID" value="CAB42630.1"/>
    <property type="status" value="JOINED"/>
    <property type="molecule type" value="Genomic_DNA"/>
</dbReference>
<dbReference type="EMBL" id="AJ133730">
    <property type="protein sequence ID" value="CAB42630.1"/>
    <property type="status" value="JOINED"/>
    <property type="molecule type" value="Genomic_DNA"/>
</dbReference>
<dbReference type="EMBL" id="AJ133731">
    <property type="protein sequence ID" value="CAB42630.1"/>
    <property type="status" value="JOINED"/>
    <property type="molecule type" value="Genomic_DNA"/>
</dbReference>
<dbReference type="EMBL" id="AJ133732">
    <property type="protein sequence ID" value="CAB42630.1"/>
    <property type="status" value="JOINED"/>
    <property type="molecule type" value="Genomic_DNA"/>
</dbReference>
<dbReference type="EMBL" id="AJ133733">
    <property type="protein sequence ID" value="CAB42630.1"/>
    <property type="status" value="JOINED"/>
    <property type="molecule type" value="Genomic_DNA"/>
</dbReference>
<dbReference type="EMBL" id="AJ133734">
    <property type="protein sequence ID" value="CAB42630.1"/>
    <property type="status" value="JOINED"/>
    <property type="molecule type" value="Genomic_DNA"/>
</dbReference>
<dbReference type="EMBL" id="AC004449">
    <property type="status" value="NOT_ANNOTATED_CDS"/>
    <property type="molecule type" value="Genomic_DNA"/>
</dbReference>
<dbReference type="EMBL" id="AC005559">
    <property type="protein sequence ID" value="AAC33280.2"/>
    <property type="molecule type" value="Genomic_DNA"/>
</dbReference>
<dbReference type="EMBL" id="AF064877">
    <property type="protein sequence ID" value="AAC39760.1"/>
    <property type="molecule type" value="mRNA"/>
</dbReference>
<dbReference type="CCDS" id="CCDS12035.1"/>
<dbReference type="RefSeq" id="NP_001185.3">
    <property type="nucleotide sequence ID" value="NM_001194.3"/>
</dbReference>
<dbReference type="PDB" id="2MPF">
    <property type="method" value="NMR"/>
    <property type="chains" value="A=521-672"/>
</dbReference>
<dbReference type="PDB" id="3U10">
    <property type="method" value="X-ray"/>
    <property type="resolution" value="2.30 A"/>
    <property type="chains" value="A=470-672"/>
</dbReference>
<dbReference type="PDBsum" id="2MPF"/>
<dbReference type="PDBsum" id="3U10"/>
<dbReference type="BMRB" id="Q9UL51"/>
<dbReference type="SMR" id="Q9UL51"/>
<dbReference type="BioGRID" id="107081">
    <property type="interactions" value="11"/>
</dbReference>
<dbReference type="ComplexPortal" id="CPX-143">
    <property type="entry name" value="HCN2 channel complex"/>
</dbReference>
<dbReference type="CORUM" id="Q9UL51"/>
<dbReference type="DIP" id="DIP-52285N"/>
<dbReference type="FunCoup" id="Q9UL51">
    <property type="interactions" value="314"/>
</dbReference>
<dbReference type="IntAct" id="Q9UL51">
    <property type="interactions" value="11"/>
</dbReference>
<dbReference type="STRING" id="9606.ENSP00000251287"/>
<dbReference type="BindingDB" id="Q9UL51"/>
<dbReference type="ChEMBL" id="CHEMBL1795172"/>
<dbReference type="DrugBank" id="DB02527">
    <property type="generic name" value="Cyclic adenosine monophosphate"/>
</dbReference>
<dbReference type="DrugBank" id="DB02315">
    <property type="generic name" value="Cyclic GMP"/>
</dbReference>
<dbReference type="DrugBank" id="DB09083">
    <property type="generic name" value="Ivabradine"/>
</dbReference>
<dbReference type="DrugCentral" id="Q9UL51"/>
<dbReference type="GuidetoPHARMACOLOGY" id="401"/>
<dbReference type="TCDB" id="1.A.1.5.11">
    <property type="family name" value="the voltage-gated ion channel (vic) superfamily"/>
</dbReference>
<dbReference type="GlyCosmos" id="Q9UL51">
    <property type="glycosylation" value="2 sites, 1 glycan"/>
</dbReference>
<dbReference type="GlyGen" id="Q9UL51">
    <property type="glycosylation" value="5 sites, 1 O-linked glycan (1 site)"/>
</dbReference>
<dbReference type="iPTMnet" id="Q9UL51"/>
<dbReference type="PhosphoSitePlus" id="Q9UL51"/>
<dbReference type="SwissPalm" id="Q9UL51"/>
<dbReference type="BioMuta" id="HCN2"/>
<dbReference type="DMDM" id="108935843"/>
<dbReference type="jPOST" id="Q9UL51"/>
<dbReference type="MassIVE" id="Q9UL51"/>
<dbReference type="PaxDb" id="9606-ENSP00000251287"/>
<dbReference type="PeptideAtlas" id="Q9UL51"/>
<dbReference type="ProteomicsDB" id="84951"/>
<dbReference type="Antibodypedia" id="22327">
    <property type="antibodies" value="201 antibodies from 32 providers"/>
</dbReference>
<dbReference type="DNASU" id="610"/>
<dbReference type="Ensembl" id="ENST00000251287.3">
    <property type="protein sequence ID" value="ENSP00000251287.1"/>
    <property type="gene ID" value="ENSG00000099822.3"/>
</dbReference>
<dbReference type="GeneID" id="610"/>
<dbReference type="KEGG" id="hsa:610"/>
<dbReference type="MANE-Select" id="ENST00000251287.3">
    <property type="protein sequence ID" value="ENSP00000251287.1"/>
    <property type="RefSeq nucleotide sequence ID" value="NM_001194.4"/>
    <property type="RefSeq protein sequence ID" value="NP_001185.3"/>
</dbReference>
<dbReference type="UCSC" id="uc002lpe.3">
    <property type="organism name" value="human"/>
</dbReference>
<dbReference type="AGR" id="HGNC:4846"/>
<dbReference type="CTD" id="610"/>
<dbReference type="DisGeNET" id="610"/>
<dbReference type="GeneCards" id="HCN2"/>
<dbReference type="HGNC" id="HGNC:4846">
    <property type="gene designation" value="HCN2"/>
</dbReference>
<dbReference type="HPA" id="ENSG00000099822">
    <property type="expression patterns" value="Tissue enriched (brain)"/>
</dbReference>
<dbReference type="MalaCards" id="HCN2"/>
<dbReference type="MIM" id="602477">
    <property type="type" value="phenotype"/>
</dbReference>
<dbReference type="MIM" id="602781">
    <property type="type" value="gene"/>
</dbReference>
<dbReference type="neXtProt" id="NX_Q9UL51"/>
<dbReference type="OpenTargets" id="ENSG00000099822"/>
<dbReference type="PharmGKB" id="PA78"/>
<dbReference type="VEuPathDB" id="HostDB:ENSG00000099822"/>
<dbReference type="eggNOG" id="KOG0498">
    <property type="taxonomic scope" value="Eukaryota"/>
</dbReference>
<dbReference type="GeneTree" id="ENSGT00940000156523"/>
<dbReference type="HOGENOM" id="CLU_005746_15_1_1"/>
<dbReference type="InParanoid" id="Q9UL51"/>
<dbReference type="OMA" id="YFVQHGC"/>
<dbReference type="OrthoDB" id="421226at2759"/>
<dbReference type="PAN-GO" id="Q9UL51">
    <property type="GO annotations" value="7 GO annotations based on evolutionary models"/>
</dbReference>
<dbReference type="PhylomeDB" id="Q9UL51"/>
<dbReference type="TreeFam" id="TF318250"/>
<dbReference type="PathwayCommons" id="Q9UL51"/>
<dbReference type="Reactome" id="R-HSA-1296061">
    <property type="pathway name" value="HCN channels"/>
</dbReference>
<dbReference type="SignaLink" id="Q9UL51"/>
<dbReference type="SIGNOR" id="Q9UL51"/>
<dbReference type="BioGRID-ORCS" id="610">
    <property type="hits" value="16 hits in 1110 CRISPR screens"/>
</dbReference>
<dbReference type="ChiTaRS" id="HCN2">
    <property type="organism name" value="human"/>
</dbReference>
<dbReference type="EvolutionaryTrace" id="Q9UL51"/>
<dbReference type="GeneWiki" id="HCN2"/>
<dbReference type="GenomeRNAi" id="610"/>
<dbReference type="Pharos" id="Q9UL51">
    <property type="development level" value="Tclin"/>
</dbReference>
<dbReference type="PRO" id="PR:Q9UL51"/>
<dbReference type="Proteomes" id="UP000005640">
    <property type="component" value="Chromosome 19"/>
</dbReference>
<dbReference type="RNAct" id="Q9UL51">
    <property type="molecule type" value="protein"/>
</dbReference>
<dbReference type="Bgee" id="ENSG00000099822">
    <property type="expression patterns" value="Expressed in C1 segment of cervical spinal cord and 142 other cell types or tissues"/>
</dbReference>
<dbReference type="GO" id="GO:0030424">
    <property type="term" value="C:axon"/>
    <property type="evidence" value="ECO:0000318"/>
    <property type="project" value="GO_Central"/>
</dbReference>
<dbReference type="GO" id="GO:0030425">
    <property type="term" value="C:dendrite"/>
    <property type="evidence" value="ECO:0000318"/>
    <property type="project" value="GO_Central"/>
</dbReference>
<dbReference type="GO" id="GO:0032590">
    <property type="term" value="C:dendrite membrane"/>
    <property type="evidence" value="ECO:0007669"/>
    <property type="project" value="Ensembl"/>
</dbReference>
<dbReference type="GO" id="GO:0043198">
    <property type="term" value="C:dendritic shaft"/>
    <property type="evidence" value="ECO:0007669"/>
    <property type="project" value="Ensembl"/>
</dbReference>
<dbReference type="GO" id="GO:0098855">
    <property type="term" value="C:HCN channel complex"/>
    <property type="evidence" value="ECO:0000314"/>
    <property type="project" value="BHF-UCL"/>
</dbReference>
<dbReference type="GO" id="GO:0043025">
    <property type="term" value="C:neuronal cell body"/>
    <property type="evidence" value="ECO:0007669"/>
    <property type="project" value="Ensembl"/>
</dbReference>
<dbReference type="GO" id="GO:0005886">
    <property type="term" value="C:plasma membrane"/>
    <property type="evidence" value="ECO:0000314"/>
    <property type="project" value="UniProtKB"/>
</dbReference>
<dbReference type="GO" id="GO:0008076">
    <property type="term" value="C:voltage-gated potassium channel complex"/>
    <property type="evidence" value="ECO:0000304"/>
    <property type="project" value="ProtInc"/>
</dbReference>
<dbReference type="GO" id="GO:0030552">
    <property type="term" value="F:cAMP binding"/>
    <property type="evidence" value="ECO:0007669"/>
    <property type="project" value="UniProtKB-KW"/>
</dbReference>
<dbReference type="GO" id="GO:0042802">
    <property type="term" value="F:identical protein binding"/>
    <property type="evidence" value="ECO:0000353"/>
    <property type="project" value="IntAct"/>
</dbReference>
<dbReference type="GO" id="GO:0005222">
    <property type="term" value="F:intracellularly cAMP-activated cation channel activity"/>
    <property type="evidence" value="ECO:0000314"/>
    <property type="project" value="UniProtKB"/>
</dbReference>
<dbReference type="GO" id="GO:0060090">
    <property type="term" value="F:molecular adaptor activity"/>
    <property type="evidence" value="ECO:0007669"/>
    <property type="project" value="Ensembl"/>
</dbReference>
<dbReference type="GO" id="GO:0030165">
    <property type="term" value="F:PDZ domain binding"/>
    <property type="evidence" value="ECO:0007669"/>
    <property type="project" value="Ensembl"/>
</dbReference>
<dbReference type="GO" id="GO:0044877">
    <property type="term" value="F:protein-containing complex binding"/>
    <property type="evidence" value="ECO:0007669"/>
    <property type="project" value="Ensembl"/>
</dbReference>
<dbReference type="GO" id="GO:0005249">
    <property type="term" value="F:voltage-gated potassium channel activity"/>
    <property type="evidence" value="ECO:0000314"/>
    <property type="project" value="UniProtKB"/>
</dbReference>
<dbReference type="GO" id="GO:0005248">
    <property type="term" value="F:voltage-gated sodium channel activity"/>
    <property type="evidence" value="ECO:0000315"/>
    <property type="project" value="UniProtKB"/>
</dbReference>
<dbReference type="GO" id="GO:0072488">
    <property type="term" value="P:ammonium transmembrane transport"/>
    <property type="evidence" value="ECO:0000250"/>
    <property type="project" value="UniProtKB"/>
</dbReference>
<dbReference type="GO" id="GO:0007267">
    <property type="term" value="P:cell-cell signaling"/>
    <property type="evidence" value="ECO:0000304"/>
    <property type="project" value="ProtInc"/>
</dbReference>
<dbReference type="GO" id="GO:1904045">
    <property type="term" value="P:cellular response to aldosterone"/>
    <property type="evidence" value="ECO:0007669"/>
    <property type="project" value="Ensembl"/>
</dbReference>
<dbReference type="GO" id="GO:0071320">
    <property type="term" value="P:cellular response to cAMP"/>
    <property type="evidence" value="ECO:0000314"/>
    <property type="project" value="UniProtKB"/>
</dbReference>
<dbReference type="GO" id="GO:0071321">
    <property type="term" value="P:cellular response to cGMP"/>
    <property type="evidence" value="ECO:0000314"/>
    <property type="project" value="UniProtKB"/>
</dbReference>
<dbReference type="GO" id="GO:0086012">
    <property type="term" value="P:membrane depolarization during cardiac muscle cell action potential"/>
    <property type="evidence" value="ECO:0000305"/>
    <property type="project" value="BHF-UCL"/>
</dbReference>
<dbReference type="GO" id="GO:1990573">
    <property type="term" value="P:potassium ion import across plasma membrane"/>
    <property type="evidence" value="ECO:0000314"/>
    <property type="project" value="BHF-UCL"/>
</dbReference>
<dbReference type="GO" id="GO:0071805">
    <property type="term" value="P:potassium ion transmembrane transport"/>
    <property type="evidence" value="ECO:0000314"/>
    <property type="project" value="UniProtKB"/>
</dbReference>
<dbReference type="GO" id="GO:0003254">
    <property type="term" value="P:regulation of membrane depolarization"/>
    <property type="evidence" value="ECO:0000318"/>
    <property type="project" value="GO_Central"/>
</dbReference>
<dbReference type="GO" id="GO:0042391">
    <property type="term" value="P:regulation of membrane potential"/>
    <property type="evidence" value="ECO:0000315"/>
    <property type="project" value="UniProtKB"/>
</dbReference>
<dbReference type="GO" id="GO:0009410">
    <property type="term" value="P:response to xenobiotic stimulus"/>
    <property type="evidence" value="ECO:0007669"/>
    <property type="project" value="Ensembl"/>
</dbReference>
<dbReference type="GO" id="GO:0098719">
    <property type="term" value="P:sodium ion import across plasma membrane"/>
    <property type="evidence" value="ECO:0000314"/>
    <property type="project" value="BHF-UCL"/>
</dbReference>
<dbReference type="GO" id="GO:0035725">
    <property type="term" value="P:sodium ion transmembrane transport"/>
    <property type="evidence" value="ECO:0000315"/>
    <property type="project" value="UniProtKB"/>
</dbReference>
<dbReference type="CDD" id="cd00038">
    <property type="entry name" value="CAP_ED"/>
    <property type="match status" value="1"/>
</dbReference>
<dbReference type="FunFam" id="1.10.287.70:FF:000031">
    <property type="entry name" value="Potassium/sodium hyperpolarization-activated cyclic nucleotide-gated channel 1, putative"/>
    <property type="match status" value="1"/>
</dbReference>
<dbReference type="FunFam" id="1.10.287.630:FF:000002">
    <property type="entry name" value="Potassium/sodium hyperpolarization-activated cyclic nucleotide-gated channel 4"/>
    <property type="match status" value="1"/>
</dbReference>
<dbReference type="FunFam" id="2.60.120.10:FF:000007">
    <property type="entry name" value="Putative potassium/sodium hyperpolarization-activated cyclic nucleotide-gated channel 2"/>
    <property type="match status" value="1"/>
</dbReference>
<dbReference type="Gene3D" id="1.10.287.70">
    <property type="match status" value="1"/>
</dbReference>
<dbReference type="Gene3D" id="1.10.287.630">
    <property type="entry name" value="Helix hairpin bin"/>
    <property type="match status" value="1"/>
</dbReference>
<dbReference type="Gene3D" id="2.60.120.10">
    <property type="entry name" value="Jelly Rolls"/>
    <property type="match status" value="1"/>
</dbReference>
<dbReference type="InterPro" id="IPR018488">
    <property type="entry name" value="cNMP-bd_CS"/>
</dbReference>
<dbReference type="InterPro" id="IPR000595">
    <property type="entry name" value="cNMP-bd_dom"/>
</dbReference>
<dbReference type="InterPro" id="IPR018490">
    <property type="entry name" value="cNMP-bd_dom_sf"/>
</dbReference>
<dbReference type="InterPro" id="IPR005821">
    <property type="entry name" value="Ion_trans_dom"/>
</dbReference>
<dbReference type="InterPro" id="IPR013621">
    <property type="entry name" value="Ion_trans_N"/>
</dbReference>
<dbReference type="InterPro" id="IPR051413">
    <property type="entry name" value="K/Na_HCN_channel"/>
</dbReference>
<dbReference type="InterPro" id="IPR003938">
    <property type="entry name" value="K_chnl_volt-dep_EAG/ELK/ERG"/>
</dbReference>
<dbReference type="InterPro" id="IPR014710">
    <property type="entry name" value="RmlC-like_jellyroll"/>
</dbReference>
<dbReference type="PANTHER" id="PTHR45689">
    <property type="entry name" value="I[[H]] CHANNEL, ISOFORM E"/>
    <property type="match status" value="1"/>
</dbReference>
<dbReference type="PANTHER" id="PTHR45689:SF11">
    <property type="entry name" value="POTASSIUM_SODIUM HYPERPOLARIZATION-ACTIVATED CYCLIC NUCLEOTIDE-GATED CHANNEL 2"/>
    <property type="match status" value="1"/>
</dbReference>
<dbReference type="Pfam" id="PF00027">
    <property type="entry name" value="cNMP_binding"/>
    <property type="match status" value="1"/>
</dbReference>
<dbReference type="Pfam" id="PF00520">
    <property type="entry name" value="Ion_trans"/>
    <property type="match status" value="1"/>
</dbReference>
<dbReference type="Pfam" id="PF08412">
    <property type="entry name" value="Ion_trans_N"/>
    <property type="match status" value="1"/>
</dbReference>
<dbReference type="PRINTS" id="PR01463">
    <property type="entry name" value="EAGCHANLFMLY"/>
</dbReference>
<dbReference type="SMART" id="SM00100">
    <property type="entry name" value="cNMP"/>
    <property type="match status" value="1"/>
</dbReference>
<dbReference type="SUPFAM" id="SSF51206">
    <property type="entry name" value="cAMP-binding domain-like"/>
    <property type="match status" value="1"/>
</dbReference>
<dbReference type="SUPFAM" id="SSF81324">
    <property type="entry name" value="Voltage-gated potassium channels"/>
    <property type="match status" value="1"/>
</dbReference>
<dbReference type="PROSITE" id="PS00888">
    <property type="entry name" value="CNMP_BINDING_1"/>
    <property type="match status" value="1"/>
</dbReference>
<dbReference type="PROSITE" id="PS50042">
    <property type="entry name" value="CNMP_BINDING_3"/>
    <property type="match status" value="1"/>
</dbReference>
<comment type="function">
    <text evidence="4 7 8 9">Hyperpolarization-activated ion channel that is permeable to sodium and potassium ions. Displays lower selectivity for K(+) over Na(+) ions (PubMed:10228147, PubMed:22006928). Contributes to the native pacemaker currents in heart (If) and in neurons (Ih) (PubMed:10228147, PubMed:10524219). Can also transport ammonium in the distal nephron (By similarity). Involved in the initiation of neuropathic pain in sensory neurons (By similarity).</text>
</comment>
<comment type="catalytic activity">
    <reaction evidence="7">
        <text>Na(+)(in) = Na(+)(out)</text>
        <dbReference type="Rhea" id="RHEA:34963"/>
        <dbReference type="ChEBI" id="CHEBI:29101"/>
    </reaction>
</comment>
<comment type="catalytic activity">
    <reaction evidence="7">
        <text>K(+)(in) = K(+)(out)</text>
        <dbReference type="Rhea" id="RHEA:29463"/>
        <dbReference type="ChEBI" id="CHEBI:29103"/>
    </reaction>
</comment>
<comment type="catalytic activity">
    <reaction evidence="4">
        <text>NH4(+)(in) = NH4(+)(out)</text>
        <dbReference type="Rhea" id="RHEA:28747"/>
        <dbReference type="ChEBI" id="CHEBI:28938"/>
    </reaction>
</comment>
<comment type="activity regulation">
    <text evidence="3 7 9">Activated by cAMP, and at 10-100 times higher concentrations, also by cGMP (PubMed:10228147, PubMed:22006928). cAMP binding causes a conformation change that leads to the assembly of an active tetramer and channel opening. Binding of cAMP removes a tonic inhibition conferred by cyclic nucleotide-binding domain (CNBD) on channel opening (PubMed:22006928). Channel activity is modulated by intracellular chloride ions and pH; acidic pH shifts the activation to more negative voltages (By similarity). Inhibited by extracellular cesium ions (PubMed:10228147).</text>
</comment>
<comment type="subunit">
    <text evidence="3 9">Homotetramer (PubMed:22006928). The channel is composed of a homo- or heterotetrameric complex of pore-forming subunits (PubMed:22006928). Heterotetramer with HCN1 (By similarity). Forms an obligate 4:4 complex with accessory subunit PEX5L (By similarity). Interacts with KCNE2 (By similarity).</text>
</comment>
<comment type="interaction">
    <interactant intactId="EBI-1751885">
        <id>Q9UL51</id>
    </interactant>
    <interactant intactId="EBI-1751885">
        <id>Q9UL51</id>
        <label>HCN2</label>
    </interactant>
    <organismsDiffer>false</organismsDiffer>
    <experiments>2</experiments>
</comment>
<comment type="interaction">
    <interactant intactId="EBI-1751885">
        <id>Q9UL51</id>
    </interactant>
    <interactant intactId="EBI-16201983">
        <id>Q4ACU6-1</id>
        <label>Shank3</label>
    </interactant>
    <organismsDiffer>true</organismsDiffer>
    <experiments>3</experiments>
</comment>
<comment type="subcellular location">
    <subcellularLocation>
        <location evidence="7 8">Cell membrane</location>
        <topology evidence="5">Multi-pass membrane protein</topology>
    </subcellularLocation>
</comment>
<comment type="tissue specificity">
    <text evidence="7 15">Highly expressed throughout the brain. Detected at low levels in heart.</text>
</comment>
<comment type="domain">
    <text evidence="2">The segment S4 is the voltage-sensor and is characterized by a series of positively charged amino acids at every third position. The ion-conducting pore region is between segment S5 and S6.</text>
</comment>
<comment type="domain">
    <text evidence="3">The cytosolic C-terminal domain contains the cyclic nucleotide-binding domain (CNBD), which mediates modulation by cyclic nucleotides.</text>
</comment>
<comment type="PTM">
    <text evidence="3">Phosphorylation at Ser-668 by PRKG2 shifts the voltage-dependence to more negative voltages, hence counteracting the stimulatory effect of cGMP on gating.</text>
</comment>
<comment type="PTM">
    <text evidence="12">S-palmitoylated.</text>
</comment>
<comment type="PTM">
    <text evidence="3">N-glycosylated; required for cell surface trafficking of HCN2.</text>
</comment>
<comment type="disease" evidence="10 13">
    <disease id="DI-06235">
        <name>Epilepsy, idiopathic generalized 17</name>
        <acronym>EIG17</acronym>
        <description>A form of idiopathic generalized epilepsy, a disorder characterized by recurring generalized seizures in the absence of detectable brain lesions and/or metabolic abnormalities. Generalized seizures arise diffusely and simultaneously from both hemispheres of the brain. Seizure types include juvenile myoclonic seizures, absence seizures, and generalized tonic-clonic seizures. Both autosomal dominant and autosomal recessive EIG17 inheritance have been reported.</description>
        <dbReference type="MIM" id="602477"/>
    </disease>
    <text>Disease susceptibility is associated with variants affecting the gene represented in this entry.</text>
</comment>
<comment type="disease" evidence="11">
    <disease id="DI-06236">
        <name>Febrile seizures, familial, 2</name>
        <acronym>FEB2</acronym>
        <description>Seizures associated with febrile episodes in childhood without any evidence of intracranial infection or defined pathologic or traumatic cause. It is a common condition, affecting 2-5% of children aged 3 months to 5 years. The majority are simple febrile seizures (generally defined as generalized onset, single seizures with a duration of less than 30 minutes). Complex febrile seizures are characterized by focal onset, duration greater than 30 minutes, and/or more than one seizure in a 24 hour period. The likelihood of developing epilepsy following simple febrile seizures is low. Complex febrile seizures are associated with a moderately increased incidence of epilepsy. FEB2 transmission pattern is consistent with autosomal dominant inheritance.</description>
        <dbReference type="MIM" id="602477"/>
    </disease>
    <text>The disease is caused by variants affecting the gene represented in this entry.</text>
</comment>
<comment type="similarity">
    <text evidence="16">Belongs to the potassium channel HCN family.</text>
</comment>
<evidence type="ECO:0000250" key="1"/>
<evidence type="ECO:0000250" key="2">
    <source>
        <dbReference type="UniProtKB" id="O60741"/>
    </source>
</evidence>
<evidence type="ECO:0000250" key="3">
    <source>
        <dbReference type="UniProtKB" id="O88703"/>
    </source>
</evidence>
<evidence type="ECO:0000250" key="4">
    <source>
        <dbReference type="UniProtKB" id="Q9JKA9"/>
    </source>
</evidence>
<evidence type="ECO:0000255" key="5"/>
<evidence type="ECO:0000256" key="6">
    <source>
        <dbReference type="SAM" id="MobiDB-lite"/>
    </source>
</evidence>
<evidence type="ECO:0000269" key="7">
    <source>
    </source>
</evidence>
<evidence type="ECO:0000269" key="8">
    <source>
    </source>
</evidence>
<evidence type="ECO:0000269" key="9">
    <source>
    </source>
</evidence>
<evidence type="ECO:0000269" key="10">
    <source>
    </source>
</evidence>
<evidence type="ECO:0000269" key="11">
    <source>
    </source>
</evidence>
<evidence type="ECO:0000269" key="12">
    <source>
    </source>
</evidence>
<evidence type="ECO:0000269" key="13">
    <source>
    </source>
</evidence>
<evidence type="ECO:0000269" key="14">
    <source>
    </source>
</evidence>
<evidence type="ECO:0000269" key="15">
    <source>
    </source>
</evidence>
<evidence type="ECO:0000305" key="16"/>
<evidence type="ECO:0000312" key="17">
    <source>
        <dbReference type="HGNC" id="HGNC:4846"/>
    </source>
</evidence>
<evidence type="ECO:0007744" key="18">
    <source>
        <dbReference type="PDB" id="2MPF"/>
    </source>
</evidence>
<evidence type="ECO:0007744" key="19">
    <source>
        <dbReference type="PDB" id="3U10"/>
    </source>
</evidence>
<evidence type="ECO:0007829" key="20">
    <source>
        <dbReference type="PDB" id="2MPF"/>
    </source>
</evidence>
<evidence type="ECO:0007829" key="21">
    <source>
        <dbReference type="PDB" id="3U10"/>
    </source>
</evidence>
<gene>
    <name evidence="17" type="primary">HCN2</name>
    <name type="synonym">BCNG2</name>
</gene>